<feature type="chain" id="PRO_0000333713" description="3-phenylpropionate/cinnamic acid dioxygenase subunit beta">
    <location>
        <begin position="1"/>
        <end position="180"/>
    </location>
</feature>
<evidence type="ECO:0000255" key="1">
    <source>
        <dbReference type="HAMAP-Rule" id="MF_01649"/>
    </source>
</evidence>
<sequence length="180" mass="21783">MKELIVNQEKRVSPELHYEISQFLYYEIALLDEWRFRDWLELLSEDLSYTMRTIVNAQTRDRRKSIQPPTTWLFNDNKFQLERRIARLETGMAWAEEPPSRTRHLLTNLVITETDLPDQFHVQSNYLLYRSQKERDEVFYVGKRLDCVRRNPKTDSWLICKREITLDQAVLTFHNLSVLF</sequence>
<proteinExistence type="inferred from homology"/>
<accession>Q7N4V9</accession>
<reference key="1">
    <citation type="journal article" date="2003" name="Nat. Biotechnol.">
        <title>The genome sequence of the entomopathogenic bacterium Photorhabdus luminescens.</title>
        <authorList>
            <person name="Duchaud E."/>
            <person name="Rusniok C."/>
            <person name="Frangeul L."/>
            <person name="Buchrieser C."/>
            <person name="Givaudan A."/>
            <person name="Taourit S."/>
            <person name="Bocs S."/>
            <person name="Boursaux-Eude C."/>
            <person name="Chandler M."/>
            <person name="Charles J.-F."/>
            <person name="Dassa E."/>
            <person name="Derose R."/>
            <person name="Derzelle S."/>
            <person name="Freyssinet G."/>
            <person name="Gaudriault S."/>
            <person name="Medigue C."/>
            <person name="Lanois A."/>
            <person name="Powell K."/>
            <person name="Siguier P."/>
            <person name="Vincent R."/>
            <person name="Wingate V."/>
            <person name="Zouine M."/>
            <person name="Glaser P."/>
            <person name="Boemare N."/>
            <person name="Danchin A."/>
            <person name="Kunst F."/>
        </authorList>
    </citation>
    <scope>NUCLEOTIDE SEQUENCE [LARGE SCALE GENOMIC DNA]</scope>
    <source>
        <strain>DSM 15139 / CIP 105565 / TT01</strain>
    </source>
</reference>
<organism>
    <name type="scientific">Photorhabdus laumondii subsp. laumondii (strain DSM 15139 / CIP 105565 / TT01)</name>
    <name type="common">Photorhabdus luminescens subsp. laumondii</name>
    <dbReference type="NCBI Taxonomy" id="243265"/>
    <lineage>
        <taxon>Bacteria</taxon>
        <taxon>Pseudomonadati</taxon>
        <taxon>Pseudomonadota</taxon>
        <taxon>Gammaproteobacteria</taxon>
        <taxon>Enterobacterales</taxon>
        <taxon>Morganellaceae</taxon>
        <taxon>Photorhabdus</taxon>
    </lineage>
</organism>
<comment type="function">
    <text evidence="1">Part of the multicomponent 3-phenylpropionate dioxygenase. Converts 3-phenylpropionic acid (PP) and cinnamic acid (CI) into 3-phenylpropionate-dihydrodiol (PP-dihydrodiol) and cinnamic acid-dihydrodiol (CI-dihydrodiol), respectively.</text>
</comment>
<comment type="catalytic activity">
    <reaction evidence="1">
        <text>3-phenylpropanoate + NADH + O2 + H(+) = 3-(cis-5,6-dihydroxycyclohexa-1,3-dien-1-yl)propanoate + NAD(+)</text>
        <dbReference type="Rhea" id="RHEA:20357"/>
        <dbReference type="ChEBI" id="CHEBI:15378"/>
        <dbReference type="ChEBI" id="CHEBI:15379"/>
        <dbReference type="ChEBI" id="CHEBI:51057"/>
        <dbReference type="ChEBI" id="CHEBI:57540"/>
        <dbReference type="ChEBI" id="CHEBI:57945"/>
        <dbReference type="ChEBI" id="CHEBI:60087"/>
        <dbReference type="EC" id="1.14.12.19"/>
    </reaction>
</comment>
<comment type="catalytic activity">
    <reaction evidence="1">
        <text>(E)-cinnamate + NADH + O2 + H(+) = (2E)-3-(cis-5,6-dihydroxycyclohexa-1,3-dien-1-yl)prop-2-enoate + NAD(+)</text>
        <dbReference type="Rhea" id="RHEA:25058"/>
        <dbReference type="ChEBI" id="CHEBI:15378"/>
        <dbReference type="ChEBI" id="CHEBI:15379"/>
        <dbReference type="ChEBI" id="CHEBI:15669"/>
        <dbReference type="ChEBI" id="CHEBI:57540"/>
        <dbReference type="ChEBI" id="CHEBI:57945"/>
        <dbReference type="ChEBI" id="CHEBI:61451"/>
        <dbReference type="EC" id="1.14.12.19"/>
    </reaction>
</comment>
<comment type="pathway">
    <text evidence="1">Aromatic compound metabolism; 3-phenylpropanoate degradation.</text>
</comment>
<comment type="subunit">
    <text evidence="1">This dioxygenase system consists of four proteins: the two subunits of the hydroxylase component (HcaE and HcaF), a ferredoxin (HcaC) and a ferredoxin reductase (HcaD).</text>
</comment>
<comment type="similarity">
    <text evidence="1">Belongs to the bacterial ring-hydroxylating dioxygenase beta subunit family.</text>
</comment>
<protein>
    <recommendedName>
        <fullName evidence="1">3-phenylpropionate/cinnamic acid dioxygenase subunit beta</fullName>
        <ecNumber evidence="1">1.14.12.19</ecNumber>
    </recommendedName>
</protein>
<dbReference type="EC" id="1.14.12.19" evidence="1"/>
<dbReference type="EMBL" id="BX571866">
    <property type="protein sequence ID" value="CAE14498.1"/>
    <property type="molecule type" value="Genomic_DNA"/>
</dbReference>
<dbReference type="RefSeq" id="WP_011146457.1">
    <property type="nucleotide sequence ID" value="NC_005126.1"/>
</dbReference>
<dbReference type="SMR" id="Q7N4V9"/>
<dbReference type="STRING" id="243265.plu2205"/>
<dbReference type="GeneID" id="48848481"/>
<dbReference type="KEGG" id="plu:plu2205"/>
<dbReference type="eggNOG" id="COG5517">
    <property type="taxonomic scope" value="Bacteria"/>
</dbReference>
<dbReference type="HOGENOM" id="CLU_102527_1_1_6"/>
<dbReference type="OrthoDB" id="7062869at2"/>
<dbReference type="UniPathway" id="UPA00714"/>
<dbReference type="Proteomes" id="UP000002514">
    <property type="component" value="Chromosome"/>
</dbReference>
<dbReference type="GO" id="GO:0008695">
    <property type="term" value="F:3-phenylpropionate dioxygenase activity"/>
    <property type="evidence" value="ECO:0007669"/>
    <property type="project" value="UniProtKB-UniRule"/>
</dbReference>
<dbReference type="GO" id="GO:0019380">
    <property type="term" value="P:3-phenylpropionate catabolic process"/>
    <property type="evidence" value="ECO:0007669"/>
    <property type="project" value="UniProtKB-UniRule"/>
</dbReference>
<dbReference type="CDD" id="cd00667">
    <property type="entry name" value="ring_hydroxylating_dioxygenases_beta"/>
    <property type="match status" value="1"/>
</dbReference>
<dbReference type="Gene3D" id="3.10.450.50">
    <property type="match status" value="1"/>
</dbReference>
<dbReference type="HAMAP" id="MF_01649">
    <property type="entry name" value="HcaF"/>
    <property type="match status" value="1"/>
</dbReference>
<dbReference type="InterPro" id="IPR054881">
    <property type="entry name" value="3PPDioc_HcaF"/>
</dbReference>
<dbReference type="InterPro" id="IPR023712">
    <property type="entry name" value="HcaF"/>
</dbReference>
<dbReference type="InterPro" id="IPR032710">
    <property type="entry name" value="NTF2-like_dom_sf"/>
</dbReference>
<dbReference type="InterPro" id="IPR000391">
    <property type="entry name" value="Rng_hydr_dOase-bsu"/>
</dbReference>
<dbReference type="NCBIfam" id="NF042947">
    <property type="entry name" value="3PPDioc_HcaF"/>
    <property type="match status" value="1"/>
</dbReference>
<dbReference type="NCBIfam" id="NF007479">
    <property type="entry name" value="PRK10069.1"/>
    <property type="match status" value="1"/>
</dbReference>
<dbReference type="PANTHER" id="PTHR41534:SF2">
    <property type="entry name" value="3-PHENYLPROPIONATE_CINNAMIC ACID DIOXYGENASE SUBUNIT BETA"/>
    <property type="match status" value="1"/>
</dbReference>
<dbReference type="PANTHER" id="PTHR41534">
    <property type="entry name" value="BLR3401 PROTEIN"/>
    <property type="match status" value="1"/>
</dbReference>
<dbReference type="Pfam" id="PF00866">
    <property type="entry name" value="Ring_hydroxyl_B"/>
    <property type="match status" value="1"/>
</dbReference>
<dbReference type="SUPFAM" id="SSF54427">
    <property type="entry name" value="NTF2-like"/>
    <property type="match status" value="1"/>
</dbReference>
<keyword id="KW-0058">Aromatic hydrocarbons catabolism</keyword>
<keyword id="KW-0223">Dioxygenase</keyword>
<keyword id="KW-0520">NAD</keyword>
<keyword id="KW-0560">Oxidoreductase</keyword>
<keyword id="KW-1185">Reference proteome</keyword>
<name>HCAF_PHOLL</name>
<gene>
    <name evidence="1" type="primary">hcaF</name>
    <name type="ordered locus">plu2205</name>
</gene>